<proteinExistence type="inferred from homology"/>
<gene>
    <name evidence="1" type="primary">queC</name>
    <name type="ordered locus">lpp2945</name>
</gene>
<dbReference type="EC" id="6.3.4.20" evidence="1"/>
<dbReference type="EMBL" id="CR628336">
    <property type="protein sequence ID" value="CAH14098.1"/>
    <property type="molecule type" value="Genomic_DNA"/>
</dbReference>
<dbReference type="RefSeq" id="WP_015961881.1">
    <property type="nucleotide sequence ID" value="NC_006368.1"/>
</dbReference>
<dbReference type="SMR" id="Q5X101"/>
<dbReference type="KEGG" id="lpp:lpp2945"/>
<dbReference type="LegioList" id="lpp2945"/>
<dbReference type="HOGENOM" id="CLU_081854_1_0_6"/>
<dbReference type="UniPathway" id="UPA00391"/>
<dbReference type="GO" id="GO:0005524">
    <property type="term" value="F:ATP binding"/>
    <property type="evidence" value="ECO:0007669"/>
    <property type="project" value="UniProtKB-UniRule"/>
</dbReference>
<dbReference type="GO" id="GO:0016879">
    <property type="term" value="F:ligase activity, forming carbon-nitrogen bonds"/>
    <property type="evidence" value="ECO:0007669"/>
    <property type="project" value="UniProtKB-UniRule"/>
</dbReference>
<dbReference type="GO" id="GO:0008270">
    <property type="term" value="F:zinc ion binding"/>
    <property type="evidence" value="ECO:0007669"/>
    <property type="project" value="UniProtKB-UniRule"/>
</dbReference>
<dbReference type="GO" id="GO:0008616">
    <property type="term" value="P:queuosine biosynthetic process"/>
    <property type="evidence" value="ECO:0007669"/>
    <property type="project" value="UniProtKB-UniRule"/>
</dbReference>
<dbReference type="CDD" id="cd01995">
    <property type="entry name" value="QueC-like"/>
    <property type="match status" value="1"/>
</dbReference>
<dbReference type="Gene3D" id="3.40.50.620">
    <property type="entry name" value="HUPs"/>
    <property type="match status" value="1"/>
</dbReference>
<dbReference type="HAMAP" id="MF_01633">
    <property type="entry name" value="QueC"/>
    <property type="match status" value="1"/>
</dbReference>
<dbReference type="InterPro" id="IPR018317">
    <property type="entry name" value="QueC"/>
</dbReference>
<dbReference type="InterPro" id="IPR014729">
    <property type="entry name" value="Rossmann-like_a/b/a_fold"/>
</dbReference>
<dbReference type="NCBIfam" id="TIGR00364">
    <property type="entry name" value="7-cyano-7-deazaguanine synthase QueC"/>
    <property type="match status" value="1"/>
</dbReference>
<dbReference type="PANTHER" id="PTHR42914">
    <property type="entry name" value="7-CYANO-7-DEAZAGUANINE SYNTHASE"/>
    <property type="match status" value="1"/>
</dbReference>
<dbReference type="PANTHER" id="PTHR42914:SF1">
    <property type="entry name" value="7-CYANO-7-DEAZAGUANINE SYNTHASE"/>
    <property type="match status" value="1"/>
</dbReference>
<dbReference type="Pfam" id="PF06508">
    <property type="entry name" value="QueC"/>
    <property type="match status" value="1"/>
</dbReference>
<dbReference type="PIRSF" id="PIRSF006293">
    <property type="entry name" value="ExsB"/>
    <property type="match status" value="1"/>
</dbReference>
<dbReference type="SUPFAM" id="SSF52402">
    <property type="entry name" value="Adenine nucleotide alpha hydrolases-like"/>
    <property type="match status" value="1"/>
</dbReference>
<organism>
    <name type="scientific">Legionella pneumophila (strain Paris)</name>
    <dbReference type="NCBI Taxonomy" id="297246"/>
    <lineage>
        <taxon>Bacteria</taxon>
        <taxon>Pseudomonadati</taxon>
        <taxon>Pseudomonadota</taxon>
        <taxon>Gammaproteobacteria</taxon>
        <taxon>Legionellales</taxon>
        <taxon>Legionellaceae</taxon>
        <taxon>Legionella</taxon>
    </lineage>
</organism>
<sequence>MKKAVVLLSGGLDSTTCLALAKSQGFACYALSFSYGQRHSAELCAATRIAKHMGAADHKIVTLDTALFGGSALTDASIEVPEFKESPEIPVTYVPARNTIFLAMALGYAESIGARDIFIGASSVDYSHYPDCRPEFIESFQSLANLATKAGIEGDRFTINAPLQYLSKVQAIQLGTELGVDYGLTVSCYQANEAGEACGQCDSCTFRKRGFKSAGVDDPTRYQKCVHI</sequence>
<protein>
    <recommendedName>
        <fullName evidence="1">7-cyano-7-deazaguanine synthase</fullName>
        <ecNumber evidence="1">6.3.4.20</ecNumber>
    </recommendedName>
    <alternativeName>
        <fullName evidence="1">7-cyano-7-carbaguanine synthase</fullName>
    </alternativeName>
    <alternativeName>
        <fullName evidence="1">PreQ(0) synthase</fullName>
    </alternativeName>
    <alternativeName>
        <fullName evidence="1">Queuosine biosynthesis protein QueC</fullName>
    </alternativeName>
</protein>
<name>QUEC_LEGPA</name>
<feature type="chain" id="PRO_0000246856" description="7-cyano-7-deazaguanine synthase">
    <location>
        <begin position="1"/>
        <end position="228"/>
    </location>
</feature>
<feature type="binding site" evidence="1">
    <location>
        <begin position="8"/>
        <end position="18"/>
    </location>
    <ligand>
        <name>ATP</name>
        <dbReference type="ChEBI" id="CHEBI:30616"/>
    </ligand>
</feature>
<feature type="binding site" evidence="1">
    <location>
        <position position="188"/>
    </location>
    <ligand>
        <name>Zn(2+)</name>
        <dbReference type="ChEBI" id="CHEBI:29105"/>
    </ligand>
</feature>
<feature type="binding site" evidence="1">
    <location>
        <position position="198"/>
    </location>
    <ligand>
        <name>Zn(2+)</name>
        <dbReference type="ChEBI" id="CHEBI:29105"/>
    </ligand>
</feature>
<feature type="binding site" evidence="1">
    <location>
        <position position="201"/>
    </location>
    <ligand>
        <name>Zn(2+)</name>
        <dbReference type="ChEBI" id="CHEBI:29105"/>
    </ligand>
</feature>
<feature type="binding site" evidence="1">
    <location>
        <position position="204"/>
    </location>
    <ligand>
        <name>Zn(2+)</name>
        <dbReference type="ChEBI" id="CHEBI:29105"/>
    </ligand>
</feature>
<evidence type="ECO:0000255" key="1">
    <source>
        <dbReference type="HAMAP-Rule" id="MF_01633"/>
    </source>
</evidence>
<accession>Q5X101</accession>
<comment type="function">
    <text evidence="1">Catalyzes the ATP-dependent conversion of 7-carboxy-7-deazaguanine (CDG) to 7-cyano-7-deazaguanine (preQ(0)).</text>
</comment>
<comment type="catalytic activity">
    <reaction evidence="1">
        <text>7-carboxy-7-deazaguanine + NH4(+) + ATP = 7-cyano-7-deazaguanine + ADP + phosphate + H2O + H(+)</text>
        <dbReference type="Rhea" id="RHEA:27982"/>
        <dbReference type="ChEBI" id="CHEBI:15377"/>
        <dbReference type="ChEBI" id="CHEBI:15378"/>
        <dbReference type="ChEBI" id="CHEBI:28938"/>
        <dbReference type="ChEBI" id="CHEBI:30616"/>
        <dbReference type="ChEBI" id="CHEBI:43474"/>
        <dbReference type="ChEBI" id="CHEBI:45075"/>
        <dbReference type="ChEBI" id="CHEBI:61036"/>
        <dbReference type="ChEBI" id="CHEBI:456216"/>
        <dbReference type="EC" id="6.3.4.20"/>
    </reaction>
</comment>
<comment type="cofactor">
    <cofactor evidence="1">
        <name>Zn(2+)</name>
        <dbReference type="ChEBI" id="CHEBI:29105"/>
    </cofactor>
    <text evidence="1">Binds 1 zinc ion per subunit.</text>
</comment>
<comment type="pathway">
    <text evidence="1">Purine metabolism; 7-cyano-7-deazaguanine biosynthesis.</text>
</comment>
<comment type="similarity">
    <text evidence="1">Belongs to the QueC family.</text>
</comment>
<keyword id="KW-0067">ATP-binding</keyword>
<keyword id="KW-0436">Ligase</keyword>
<keyword id="KW-0479">Metal-binding</keyword>
<keyword id="KW-0547">Nucleotide-binding</keyword>
<keyword id="KW-0671">Queuosine biosynthesis</keyword>
<keyword id="KW-0862">Zinc</keyword>
<reference key="1">
    <citation type="journal article" date="2004" name="Nat. Genet.">
        <title>Evidence in the Legionella pneumophila genome for exploitation of host cell functions and high genome plasticity.</title>
        <authorList>
            <person name="Cazalet C."/>
            <person name="Rusniok C."/>
            <person name="Brueggemann H."/>
            <person name="Zidane N."/>
            <person name="Magnier A."/>
            <person name="Ma L."/>
            <person name="Tichit M."/>
            <person name="Jarraud S."/>
            <person name="Bouchier C."/>
            <person name="Vandenesch F."/>
            <person name="Kunst F."/>
            <person name="Etienne J."/>
            <person name="Glaser P."/>
            <person name="Buchrieser C."/>
        </authorList>
    </citation>
    <scope>NUCLEOTIDE SEQUENCE [LARGE SCALE GENOMIC DNA]</scope>
    <source>
        <strain>Paris</strain>
    </source>
</reference>